<proteinExistence type="inferred from homology"/>
<evidence type="ECO:0000255" key="1">
    <source>
        <dbReference type="HAMAP-Rule" id="MF_00281"/>
    </source>
</evidence>
<accession>Q8R9C6</accession>
<sequence>MEELLKELSKRAEEEILKAKSLQEIESLRVKYLGKKGELTQILRGMGSLSPEERPVIGQLANDVREKIENMILERREKIAKEEKERKIKEEYIDITMPGKPYKYGHKHPITLVMDEIKRIFLGLGFSIAEGPEVELAYYNFEALNTPEDHPARDLQDTFYITSDILLRTQTSPVQVRTMEKTKPPIRVISPGRVYRSDDIDATHSPVFHQMEGLVVDEGITMGDLKGVLNVFAKKFFGEQTKTKFRPHFFPFTEPSAEMDVSCFACGGKGCRVCGYTGWIEILGAGMVHPNVLRMSGIDPEKYTGFAFGLGIDRIAMLKYGIEDLRLLFENDMRFIEQF</sequence>
<reference key="1">
    <citation type="journal article" date="2002" name="Genome Res.">
        <title>A complete sequence of the T. tengcongensis genome.</title>
        <authorList>
            <person name="Bao Q."/>
            <person name="Tian Y."/>
            <person name="Li W."/>
            <person name="Xu Z."/>
            <person name="Xuan Z."/>
            <person name="Hu S."/>
            <person name="Dong W."/>
            <person name="Yang J."/>
            <person name="Chen Y."/>
            <person name="Xue Y."/>
            <person name="Xu Y."/>
            <person name="Lai X."/>
            <person name="Huang L."/>
            <person name="Dong X."/>
            <person name="Ma Y."/>
            <person name="Ling L."/>
            <person name="Tan H."/>
            <person name="Chen R."/>
            <person name="Wang J."/>
            <person name="Yu J."/>
            <person name="Yang H."/>
        </authorList>
    </citation>
    <scope>NUCLEOTIDE SEQUENCE [LARGE SCALE GENOMIC DNA]</scope>
    <source>
        <strain>DSM 15242 / JCM 11007 / NBRC 100824 / MB4</strain>
    </source>
</reference>
<name>SYFA_CALS4</name>
<gene>
    <name evidence="1" type="primary">pheS</name>
    <name type="ordered locus">TTE1689</name>
</gene>
<organism>
    <name type="scientific">Caldanaerobacter subterraneus subsp. tengcongensis (strain DSM 15242 / JCM 11007 / NBRC 100824 / MB4)</name>
    <name type="common">Thermoanaerobacter tengcongensis</name>
    <dbReference type="NCBI Taxonomy" id="273068"/>
    <lineage>
        <taxon>Bacteria</taxon>
        <taxon>Bacillati</taxon>
        <taxon>Bacillota</taxon>
        <taxon>Clostridia</taxon>
        <taxon>Thermoanaerobacterales</taxon>
        <taxon>Thermoanaerobacteraceae</taxon>
        <taxon>Caldanaerobacter</taxon>
    </lineage>
</organism>
<dbReference type="EC" id="6.1.1.20" evidence="1"/>
<dbReference type="EMBL" id="AE008691">
    <property type="protein sequence ID" value="AAM24890.1"/>
    <property type="molecule type" value="Genomic_DNA"/>
</dbReference>
<dbReference type="RefSeq" id="WP_011025898.1">
    <property type="nucleotide sequence ID" value="NZ_JANUCV010000001.1"/>
</dbReference>
<dbReference type="SMR" id="Q8R9C6"/>
<dbReference type="STRING" id="273068.TTE1689"/>
<dbReference type="KEGG" id="tte:TTE1689"/>
<dbReference type="eggNOG" id="COG0016">
    <property type="taxonomic scope" value="Bacteria"/>
</dbReference>
<dbReference type="HOGENOM" id="CLU_025086_0_1_9"/>
<dbReference type="OrthoDB" id="9800719at2"/>
<dbReference type="Proteomes" id="UP000000555">
    <property type="component" value="Chromosome"/>
</dbReference>
<dbReference type="GO" id="GO:0005737">
    <property type="term" value="C:cytoplasm"/>
    <property type="evidence" value="ECO:0007669"/>
    <property type="project" value="UniProtKB-SubCell"/>
</dbReference>
<dbReference type="GO" id="GO:0005524">
    <property type="term" value="F:ATP binding"/>
    <property type="evidence" value="ECO:0007669"/>
    <property type="project" value="UniProtKB-UniRule"/>
</dbReference>
<dbReference type="GO" id="GO:0140096">
    <property type="term" value="F:catalytic activity, acting on a protein"/>
    <property type="evidence" value="ECO:0007669"/>
    <property type="project" value="UniProtKB-ARBA"/>
</dbReference>
<dbReference type="GO" id="GO:0000287">
    <property type="term" value="F:magnesium ion binding"/>
    <property type="evidence" value="ECO:0007669"/>
    <property type="project" value="UniProtKB-UniRule"/>
</dbReference>
<dbReference type="GO" id="GO:0004826">
    <property type="term" value="F:phenylalanine-tRNA ligase activity"/>
    <property type="evidence" value="ECO:0007669"/>
    <property type="project" value="UniProtKB-UniRule"/>
</dbReference>
<dbReference type="GO" id="GO:0016740">
    <property type="term" value="F:transferase activity"/>
    <property type="evidence" value="ECO:0007669"/>
    <property type="project" value="UniProtKB-ARBA"/>
</dbReference>
<dbReference type="GO" id="GO:0000049">
    <property type="term" value="F:tRNA binding"/>
    <property type="evidence" value="ECO:0007669"/>
    <property type="project" value="InterPro"/>
</dbReference>
<dbReference type="GO" id="GO:0006432">
    <property type="term" value="P:phenylalanyl-tRNA aminoacylation"/>
    <property type="evidence" value="ECO:0007669"/>
    <property type="project" value="UniProtKB-UniRule"/>
</dbReference>
<dbReference type="CDD" id="cd00496">
    <property type="entry name" value="PheRS_alpha_core"/>
    <property type="match status" value="1"/>
</dbReference>
<dbReference type="FunFam" id="3.30.930.10:FF:000003">
    <property type="entry name" value="Phenylalanine--tRNA ligase alpha subunit"/>
    <property type="match status" value="1"/>
</dbReference>
<dbReference type="Gene3D" id="3.30.930.10">
    <property type="entry name" value="Bira Bifunctional Protein, Domain 2"/>
    <property type="match status" value="1"/>
</dbReference>
<dbReference type="HAMAP" id="MF_00281">
    <property type="entry name" value="Phe_tRNA_synth_alpha1"/>
    <property type="match status" value="1"/>
</dbReference>
<dbReference type="InterPro" id="IPR006195">
    <property type="entry name" value="aa-tRNA-synth_II"/>
</dbReference>
<dbReference type="InterPro" id="IPR045864">
    <property type="entry name" value="aa-tRNA-synth_II/BPL/LPL"/>
</dbReference>
<dbReference type="InterPro" id="IPR004529">
    <property type="entry name" value="Phe-tRNA-synth_IIc_asu"/>
</dbReference>
<dbReference type="InterPro" id="IPR004188">
    <property type="entry name" value="Phe-tRNA_ligase_II_N"/>
</dbReference>
<dbReference type="InterPro" id="IPR022911">
    <property type="entry name" value="Phe_tRNA_ligase_alpha1_bac"/>
</dbReference>
<dbReference type="InterPro" id="IPR002319">
    <property type="entry name" value="Phenylalanyl-tRNA_Synthase"/>
</dbReference>
<dbReference type="InterPro" id="IPR010978">
    <property type="entry name" value="tRNA-bd_arm"/>
</dbReference>
<dbReference type="NCBIfam" id="TIGR00468">
    <property type="entry name" value="pheS"/>
    <property type="match status" value="1"/>
</dbReference>
<dbReference type="PANTHER" id="PTHR11538:SF41">
    <property type="entry name" value="PHENYLALANINE--TRNA LIGASE, MITOCHONDRIAL"/>
    <property type="match status" value="1"/>
</dbReference>
<dbReference type="PANTHER" id="PTHR11538">
    <property type="entry name" value="PHENYLALANYL-TRNA SYNTHETASE"/>
    <property type="match status" value="1"/>
</dbReference>
<dbReference type="Pfam" id="PF02912">
    <property type="entry name" value="Phe_tRNA-synt_N"/>
    <property type="match status" value="1"/>
</dbReference>
<dbReference type="Pfam" id="PF01409">
    <property type="entry name" value="tRNA-synt_2d"/>
    <property type="match status" value="1"/>
</dbReference>
<dbReference type="SUPFAM" id="SSF55681">
    <property type="entry name" value="Class II aaRS and biotin synthetases"/>
    <property type="match status" value="1"/>
</dbReference>
<dbReference type="SUPFAM" id="SSF46589">
    <property type="entry name" value="tRNA-binding arm"/>
    <property type="match status" value="1"/>
</dbReference>
<dbReference type="PROSITE" id="PS50862">
    <property type="entry name" value="AA_TRNA_LIGASE_II"/>
    <property type="match status" value="1"/>
</dbReference>
<protein>
    <recommendedName>
        <fullName evidence="1">Phenylalanine--tRNA ligase alpha subunit</fullName>
        <ecNumber evidence="1">6.1.1.20</ecNumber>
    </recommendedName>
    <alternativeName>
        <fullName evidence="1">Phenylalanyl-tRNA synthetase alpha subunit</fullName>
        <shortName evidence="1">PheRS</shortName>
    </alternativeName>
</protein>
<feature type="chain" id="PRO_0000126787" description="Phenylalanine--tRNA ligase alpha subunit">
    <location>
        <begin position="1"/>
        <end position="339"/>
    </location>
</feature>
<feature type="binding site" evidence="1">
    <location>
        <position position="254"/>
    </location>
    <ligand>
        <name>Mg(2+)</name>
        <dbReference type="ChEBI" id="CHEBI:18420"/>
        <note>shared with beta subunit</note>
    </ligand>
</feature>
<comment type="catalytic activity">
    <reaction evidence="1">
        <text>tRNA(Phe) + L-phenylalanine + ATP = L-phenylalanyl-tRNA(Phe) + AMP + diphosphate + H(+)</text>
        <dbReference type="Rhea" id="RHEA:19413"/>
        <dbReference type="Rhea" id="RHEA-COMP:9668"/>
        <dbReference type="Rhea" id="RHEA-COMP:9699"/>
        <dbReference type="ChEBI" id="CHEBI:15378"/>
        <dbReference type="ChEBI" id="CHEBI:30616"/>
        <dbReference type="ChEBI" id="CHEBI:33019"/>
        <dbReference type="ChEBI" id="CHEBI:58095"/>
        <dbReference type="ChEBI" id="CHEBI:78442"/>
        <dbReference type="ChEBI" id="CHEBI:78531"/>
        <dbReference type="ChEBI" id="CHEBI:456215"/>
        <dbReference type="EC" id="6.1.1.20"/>
    </reaction>
</comment>
<comment type="cofactor">
    <cofactor evidence="1">
        <name>Mg(2+)</name>
        <dbReference type="ChEBI" id="CHEBI:18420"/>
    </cofactor>
    <text evidence="1">Binds 2 magnesium ions per tetramer.</text>
</comment>
<comment type="subunit">
    <text evidence="1">Tetramer of two alpha and two beta subunits.</text>
</comment>
<comment type="subcellular location">
    <subcellularLocation>
        <location evidence="1">Cytoplasm</location>
    </subcellularLocation>
</comment>
<comment type="similarity">
    <text evidence="1">Belongs to the class-II aminoacyl-tRNA synthetase family. Phe-tRNA synthetase alpha subunit type 1 subfamily.</text>
</comment>
<keyword id="KW-0030">Aminoacyl-tRNA synthetase</keyword>
<keyword id="KW-0067">ATP-binding</keyword>
<keyword id="KW-0963">Cytoplasm</keyword>
<keyword id="KW-0436">Ligase</keyword>
<keyword id="KW-0460">Magnesium</keyword>
<keyword id="KW-0479">Metal-binding</keyword>
<keyword id="KW-0547">Nucleotide-binding</keyword>
<keyword id="KW-0648">Protein biosynthesis</keyword>
<keyword id="KW-1185">Reference proteome</keyword>